<evidence type="ECO:0000255" key="1">
    <source>
        <dbReference type="HAMAP-Rule" id="MF_01451"/>
    </source>
</evidence>
<gene>
    <name evidence="1" type="primary">addA</name>
    <name type="ordered locus">LJ_1203</name>
</gene>
<feature type="chain" id="PRO_0000379284" description="ATP-dependent helicase/nuclease subunit A">
    <location>
        <begin position="1"/>
        <end position="1204"/>
    </location>
</feature>
<feature type="domain" description="UvrD-like helicase ATP-binding" evidence="1">
    <location>
        <begin position="2"/>
        <end position="469"/>
    </location>
</feature>
<feature type="domain" description="UvrD-like helicase C-terminal" evidence="1">
    <location>
        <begin position="496"/>
        <end position="784"/>
    </location>
</feature>
<feature type="binding site" evidence="1">
    <location>
        <begin position="23"/>
        <end position="30"/>
    </location>
    <ligand>
        <name>ATP</name>
        <dbReference type="ChEBI" id="CHEBI:30616"/>
    </ligand>
</feature>
<reference key="1">
    <citation type="journal article" date="2004" name="Proc. Natl. Acad. Sci. U.S.A.">
        <title>The genome sequence of the probiotic intestinal bacterium Lactobacillus johnsonii NCC 533.</title>
        <authorList>
            <person name="Pridmore R.D."/>
            <person name="Berger B."/>
            <person name="Desiere F."/>
            <person name="Vilanova D."/>
            <person name="Barretto C."/>
            <person name="Pittet A.-C."/>
            <person name="Zwahlen M.-C."/>
            <person name="Rouvet M."/>
            <person name="Altermann E."/>
            <person name="Barrangou R."/>
            <person name="Mollet B."/>
            <person name="Mercenier A."/>
            <person name="Klaenhammer T."/>
            <person name="Arigoni F."/>
            <person name="Schell M.A."/>
        </authorList>
    </citation>
    <scope>NUCLEOTIDE SEQUENCE [LARGE SCALE GENOMIC DNA]</scope>
    <source>
        <strain>CNCM I-1225 / La1 / NCC 533</strain>
    </source>
</reference>
<accession>Q74JA6</accession>
<proteinExistence type="inferred from homology"/>
<organism>
    <name type="scientific">Lactobacillus johnsonii (strain CNCM I-12250 / La1 / NCC 533)</name>
    <dbReference type="NCBI Taxonomy" id="257314"/>
    <lineage>
        <taxon>Bacteria</taxon>
        <taxon>Bacillati</taxon>
        <taxon>Bacillota</taxon>
        <taxon>Bacilli</taxon>
        <taxon>Lactobacillales</taxon>
        <taxon>Lactobacillaceae</taxon>
        <taxon>Lactobacillus</taxon>
    </lineage>
</organism>
<dbReference type="EC" id="3.1.-.-" evidence="1"/>
<dbReference type="EC" id="5.6.2.4" evidence="1"/>
<dbReference type="EMBL" id="AE017198">
    <property type="protein sequence ID" value="AAS09024.1"/>
    <property type="molecule type" value="Genomic_DNA"/>
</dbReference>
<dbReference type="RefSeq" id="WP_011162032.1">
    <property type="nucleotide sequence ID" value="NC_005362.1"/>
</dbReference>
<dbReference type="SMR" id="Q74JA6"/>
<dbReference type="KEGG" id="ljo:LJ_1203"/>
<dbReference type="PATRIC" id="fig|257314.6.peg.1069"/>
<dbReference type="eggNOG" id="COG1074">
    <property type="taxonomic scope" value="Bacteria"/>
</dbReference>
<dbReference type="HOGENOM" id="CLU_001114_3_1_9"/>
<dbReference type="Proteomes" id="UP000000581">
    <property type="component" value="Chromosome"/>
</dbReference>
<dbReference type="GO" id="GO:0005829">
    <property type="term" value="C:cytosol"/>
    <property type="evidence" value="ECO:0007669"/>
    <property type="project" value="TreeGrafter"/>
</dbReference>
<dbReference type="GO" id="GO:0033202">
    <property type="term" value="C:DNA helicase complex"/>
    <property type="evidence" value="ECO:0007669"/>
    <property type="project" value="TreeGrafter"/>
</dbReference>
<dbReference type="GO" id="GO:0043138">
    <property type="term" value="F:3'-5' DNA helicase activity"/>
    <property type="evidence" value="ECO:0007669"/>
    <property type="project" value="UniProtKB-UniRule"/>
</dbReference>
<dbReference type="GO" id="GO:0008408">
    <property type="term" value="F:3'-5' exonuclease activity"/>
    <property type="evidence" value="ECO:0007669"/>
    <property type="project" value="UniProtKB-UniRule"/>
</dbReference>
<dbReference type="GO" id="GO:0005524">
    <property type="term" value="F:ATP binding"/>
    <property type="evidence" value="ECO:0007669"/>
    <property type="project" value="UniProtKB-UniRule"/>
</dbReference>
<dbReference type="GO" id="GO:0016887">
    <property type="term" value="F:ATP hydrolysis activity"/>
    <property type="evidence" value="ECO:0007669"/>
    <property type="project" value="RHEA"/>
</dbReference>
<dbReference type="GO" id="GO:0003690">
    <property type="term" value="F:double-stranded DNA binding"/>
    <property type="evidence" value="ECO:0007669"/>
    <property type="project" value="UniProtKB-UniRule"/>
</dbReference>
<dbReference type="GO" id="GO:0000724">
    <property type="term" value="P:double-strand break repair via homologous recombination"/>
    <property type="evidence" value="ECO:0007669"/>
    <property type="project" value="UniProtKB-UniRule"/>
</dbReference>
<dbReference type="Gene3D" id="3.90.320.10">
    <property type="match status" value="1"/>
</dbReference>
<dbReference type="Gene3D" id="3.40.50.300">
    <property type="entry name" value="P-loop containing nucleotide triphosphate hydrolases"/>
    <property type="match status" value="4"/>
</dbReference>
<dbReference type="HAMAP" id="MF_01451">
    <property type="entry name" value="AddA"/>
    <property type="match status" value="1"/>
</dbReference>
<dbReference type="InterPro" id="IPR014152">
    <property type="entry name" value="AddA"/>
</dbReference>
<dbReference type="InterPro" id="IPR014017">
    <property type="entry name" value="DNA_helicase_UvrD-like_C"/>
</dbReference>
<dbReference type="InterPro" id="IPR000212">
    <property type="entry name" value="DNA_helicase_UvrD/REP"/>
</dbReference>
<dbReference type="InterPro" id="IPR027417">
    <property type="entry name" value="P-loop_NTPase"/>
</dbReference>
<dbReference type="InterPro" id="IPR011604">
    <property type="entry name" value="PDDEXK-like_dom_sf"/>
</dbReference>
<dbReference type="InterPro" id="IPR038726">
    <property type="entry name" value="PDDEXK_AddAB-type"/>
</dbReference>
<dbReference type="InterPro" id="IPR011335">
    <property type="entry name" value="Restrct_endonuc-II-like"/>
</dbReference>
<dbReference type="InterPro" id="IPR014016">
    <property type="entry name" value="UvrD-like_ATP-bd"/>
</dbReference>
<dbReference type="NCBIfam" id="TIGR02785">
    <property type="entry name" value="addA_Gpos"/>
    <property type="match status" value="1"/>
</dbReference>
<dbReference type="PANTHER" id="PTHR11070:SF48">
    <property type="entry name" value="ATP-DEPENDENT HELICASE_NUCLEASE SUBUNIT A"/>
    <property type="match status" value="1"/>
</dbReference>
<dbReference type="PANTHER" id="PTHR11070">
    <property type="entry name" value="UVRD / RECB / PCRA DNA HELICASE FAMILY MEMBER"/>
    <property type="match status" value="1"/>
</dbReference>
<dbReference type="Pfam" id="PF12705">
    <property type="entry name" value="PDDEXK_1"/>
    <property type="match status" value="1"/>
</dbReference>
<dbReference type="Pfam" id="PF00580">
    <property type="entry name" value="UvrD-helicase"/>
    <property type="match status" value="1"/>
</dbReference>
<dbReference type="Pfam" id="PF13361">
    <property type="entry name" value="UvrD_C"/>
    <property type="match status" value="1"/>
</dbReference>
<dbReference type="SUPFAM" id="SSF52540">
    <property type="entry name" value="P-loop containing nucleoside triphosphate hydrolases"/>
    <property type="match status" value="1"/>
</dbReference>
<dbReference type="SUPFAM" id="SSF52980">
    <property type="entry name" value="Restriction endonuclease-like"/>
    <property type="match status" value="1"/>
</dbReference>
<dbReference type="PROSITE" id="PS51198">
    <property type="entry name" value="UVRD_HELICASE_ATP_BIND"/>
    <property type="match status" value="1"/>
</dbReference>
<dbReference type="PROSITE" id="PS51217">
    <property type="entry name" value="UVRD_HELICASE_CTER"/>
    <property type="match status" value="1"/>
</dbReference>
<comment type="function">
    <text evidence="1">The heterodimer acts as both an ATP-dependent DNA helicase and an ATP-dependent, dual-direction single-stranded exonuclease. Recognizes the chi site generating a DNA molecule suitable for the initiation of homologous recombination. The AddA nuclease domain is required for chi fragment generation; this subunit has the helicase and 3' -&gt; 5' nuclease activities.</text>
</comment>
<comment type="catalytic activity">
    <reaction evidence="1">
        <text>Couples ATP hydrolysis with the unwinding of duplex DNA by translocating in the 3'-5' direction.</text>
        <dbReference type="EC" id="5.6.2.4"/>
    </reaction>
</comment>
<comment type="catalytic activity">
    <reaction evidence="1">
        <text>ATP + H2O = ADP + phosphate + H(+)</text>
        <dbReference type="Rhea" id="RHEA:13065"/>
        <dbReference type="ChEBI" id="CHEBI:15377"/>
        <dbReference type="ChEBI" id="CHEBI:15378"/>
        <dbReference type="ChEBI" id="CHEBI:30616"/>
        <dbReference type="ChEBI" id="CHEBI:43474"/>
        <dbReference type="ChEBI" id="CHEBI:456216"/>
        <dbReference type="EC" id="5.6.2.4"/>
    </reaction>
</comment>
<comment type="cofactor">
    <cofactor evidence="1">
        <name>Mg(2+)</name>
        <dbReference type="ChEBI" id="CHEBI:18420"/>
    </cofactor>
</comment>
<comment type="subunit">
    <text evidence="1">Heterodimer of AddA and AddB/RexB.</text>
</comment>
<comment type="similarity">
    <text evidence="1">Belongs to the helicase family. AddA subfamily.</text>
</comment>
<sequence length="1204" mass="139871">MTKFTKEQNQAINDYGKDILVSASAGSGKTTVLVERVLKRILSGTPVSSLLIITFTKAAAREMKERIKQKISDQIEKEPNNQFLRSQLLDVDTANISTIDSFCLDVIRRFYYVIDLDPQFSVLTDETQAELLKERALHEIEIEYLEKNDQDFQDFYDNFSGDRDAEGARNLLLQLYNTVVTEPNYEKFLNNLPNFYQVQDDLIESDLWQTQIKPLLIKEIKDLQTEIRQFFENPQMENPDLVKVKENYDIFTSRLEQFLNALEDDHSYNEIRASLMNCKFEKNIRKSKKWSEESLETYQESQKLKSDLNDQLKKIFANFFVVEEKEQVNILKKSEKLVKTIVDAEKKLIKRFGQLKREQNLIDYSDMEQFAFSILTTDTSNAHIAQEYYQEKFNEILIDEYQDVNALQENIIAAIKKKGQNNLFMVGDIKQSIYGFRQARPDLFLSKYHAYGQNDDSEKIVLSDNFRSTQRVTKTVNSLFNPILTANFGGIDYKKEGQLQFGATYYPTDLPTASEYIFTDKKQTQASFEENFGDEMDFSEIQMVIARIKQLKEENFQVWDRKTQLKRPLEYSDIAIITRTRSDNLQVMQEFAKADLPLFVTDAQNYFQTFELVMIMNYLRLIDNPQQDIPLVAVLRSPLFNFKEPELAQIRVKTRSGNFYNALTSFASVNSDLGQKCKNFLQQLESLRSFAATHRISELIWSIYERTHLLEIVTGLPNGQQRRVNLESLYERATSYESAGFKGLYQFISFIERMRKNQKDLAQPLLSDKADKAVKLMTIHASKGLEFPVVFVMGLGHKYQTRDLSGNFTISKDGLGLTIKEKDYRIDSLVKSLADVEKRQQMLEEEARILYVGLTRAQQKLILVASVSEMEAKQKKWESEIDQKTNILPLIRKINAQSPLDFLGPKLEQKHEFDQTIEDMTLALEEQDKIYYLKFAVQSDIEEKDEQKDDTQKLSSKMNDVVKTLYNFEYPFADATKTTAYQSVSEIKKVFNDPMDTELENSRLISSSNRYLQPIDETPVFLEKQKFTGAEIGTAMHLVLQYYDYQGDKTEINLEQEIEELVELGKLNPLMVPHLSKEALNWFVMSEFAAEFWQKPEKLHRESQFSSLVNASELFNDFSDSAAKILVHGTIDGYFETDEGLILFDYKTDFVDKTHEEQAIDKIKKKYTGQLRLYEQALNEISENKKVIGKYLILLDARKVVPVD</sequence>
<keyword id="KW-0067">ATP-binding</keyword>
<keyword id="KW-0227">DNA damage</keyword>
<keyword id="KW-0234">DNA repair</keyword>
<keyword id="KW-0238">DNA-binding</keyword>
<keyword id="KW-0269">Exonuclease</keyword>
<keyword id="KW-0347">Helicase</keyword>
<keyword id="KW-0378">Hydrolase</keyword>
<keyword id="KW-0413">Isomerase</keyword>
<keyword id="KW-0540">Nuclease</keyword>
<keyword id="KW-0547">Nucleotide-binding</keyword>
<protein>
    <recommendedName>
        <fullName evidence="1">ATP-dependent helicase/nuclease subunit A</fullName>
        <ecNumber evidence="1">3.1.-.-</ecNumber>
        <ecNumber evidence="1">5.6.2.4</ecNumber>
    </recommendedName>
    <alternativeName>
        <fullName evidence="1">ATP-dependent helicase/nuclease AddA</fullName>
    </alternativeName>
    <alternativeName>
        <fullName evidence="1">DNA 3'-5' helicase AddA</fullName>
    </alternativeName>
</protein>
<name>ADDA_LACJO</name>